<evidence type="ECO:0000255" key="1">
    <source>
        <dbReference type="PROSITE-ProRule" id="PRU00159"/>
    </source>
</evidence>
<evidence type="ECO:0000255" key="2">
    <source>
        <dbReference type="PROSITE-ProRule" id="PRU10027"/>
    </source>
</evidence>
<evidence type="ECO:0000256" key="3">
    <source>
        <dbReference type="SAM" id="MobiDB-lite"/>
    </source>
</evidence>
<evidence type="ECO:0000269" key="4">
    <source>
    </source>
</evidence>
<evidence type="ECO:0000269" key="5">
    <source>
    </source>
</evidence>
<evidence type="ECO:0000269" key="6">
    <source>
    </source>
</evidence>
<evidence type="ECO:0000269" key="7">
    <source>
    </source>
</evidence>
<evidence type="ECO:0000269" key="8">
    <source>
    </source>
</evidence>
<evidence type="ECO:0000269" key="9">
    <source>
    </source>
</evidence>
<evidence type="ECO:0000269" key="10">
    <source>
    </source>
</evidence>
<evidence type="ECO:0000269" key="11">
    <source>
    </source>
</evidence>
<evidence type="ECO:0000305" key="12"/>
<protein>
    <recommendedName>
        <fullName>Discs overgrown protein kinase</fullName>
        <ecNumber>2.7.11.1</ecNumber>
    </recommendedName>
    <alternativeName>
        <fullName>Protein double-time</fullName>
    </alternativeName>
</protein>
<proteinExistence type="evidence at protein level"/>
<comment type="function">
    <text evidence="4 5 7 9 10 11">Serine/threonine-protein kinase which is involved in the circadian rhythm pathway, viability and planar cell polarity (PubMed:10556065, PubMed:26082158, PubMed:32750048, PubMed:9674430, PubMed:9674431). In the circadian rhythm pathway, phosphorylates the clock gene period (per) and targets it for degradation in the absence of timeless (tim), thus contributing to production of the circadian oscillations of the clock genes (PubMed:26082158, PubMed:32750048, PubMed:9674430, PubMed:9674431). Together with CkIalpha, regulates processing of ci by phosphorylating it, which promotes its binding to slmb, the F-box recognition component of the SCF(slmb) E3 ubiquitin-protein ligase (PubMed:16326393). Involved in the inhibition of apoptosis during cell proliferation and growth arrest in imaginal disks (PubMed:10556065). Also functions in planar cell polarity (PubMed:32750048).</text>
</comment>
<comment type="catalytic activity">
    <reaction>
        <text>L-seryl-[protein] + ATP = O-phospho-L-seryl-[protein] + ADP + H(+)</text>
        <dbReference type="Rhea" id="RHEA:17989"/>
        <dbReference type="Rhea" id="RHEA-COMP:9863"/>
        <dbReference type="Rhea" id="RHEA-COMP:11604"/>
        <dbReference type="ChEBI" id="CHEBI:15378"/>
        <dbReference type="ChEBI" id="CHEBI:29999"/>
        <dbReference type="ChEBI" id="CHEBI:30616"/>
        <dbReference type="ChEBI" id="CHEBI:83421"/>
        <dbReference type="ChEBI" id="CHEBI:456216"/>
        <dbReference type="EC" id="2.7.11.1"/>
    </reaction>
</comment>
<comment type="catalytic activity">
    <reaction>
        <text>L-threonyl-[protein] + ATP = O-phospho-L-threonyl-[protein] + ADP + H(+)</text>
        <dbReference type="Rhea" id="RHEA:46608"/>
        <dbReference type="Rhea" id="RHEA-COMP:11060"/>
        <dbReference type="Rhea" id="RHEA-COMP:11605"/>
        <dbReference type="ChEBI" id="CHEBI:15378"/>
        <dbReference type="ChEBI" id="CHEBI:30013"/>
        <dbReference type="ChEBI" id="CHEBI:30616"/>
        <dbReference type="ChEBI" id="CHEBI:61977"/>
        <dbReference type="ChEBI" id="CHEBI:456216"/>
        <dbReference type="EC" id="2.7.11.1"/>
    </reaction>
</comment>
<comment type="subunit">
    <text evidence="7 8 11">Forms a complex with per (PubMed:9674431). Interacts with Dlish (PubMed:27692068). Interacts (via nuclear localization signal) with Bdbt (PubMed:26082158).</text>
</comment>
<comment type="subcellular location">
    <subcellularLocation>
        <location evidence="7">Nucleus</location>
    </subcellularLocation>
    <subcellularLocation>
        <location evidence="7">Cytoplasm</location>
        <location evidence="7">Cytosol</location>
    </subcellularLocation>
    <text evidence="7">Detected in the nucleus and cytoplasm of the small and large lateral neurons (sLNv and lLNv).</text>
</comment>
<comment type="tissue specificity">
    <text evidence="4 7">Detected in the head (at protein level) (PubMed:26082158). Expressed in photoreceptor cells of the eyes as well as in the region situated between the optic lobe and the central brain (PubMed:10556065).</text>
</comment>
<comment type="similarity">
    <text evidence="12">Belongs to the protein kinase superfamily. CK1 Ser/Thr protein kinase family. Casein kinase I subfamily.</text>
</comment>
<name>DCO_DROME</name>
<sequence length="440" mass="47958">MELRVGNKYRLGRKIGSGSFGDIYLGTTINTGEEVAIKLECIRTKHPQLHIESKFYKTMQGGIGIPRIIWCGSEGDYNVMVMELLGPSLEDLFNFCSRRFSLKTVLLLADQMISRIDYIHSRDFIHRDIKPDNFLMGLGKKGNLVYIIDFGLAKKFRDARSLKHIPYRENKNLTGTARYASINTHLGIEQSRRDDLESLGYVLMYFNLGALPWQGLKAANKRQKYERISEKKLSTSIVVLCKGFPSEFVNYLNFCRQMHFDQRPDYCHLRKLFRNLFHRLGFTYDYVFDWNLLKFGGPRNPQAIQQAQDGADGQAGHDAVAAAAAVAAAAAASSHQQQQHKVNAALGGGGGSAAQQQLQGGQTLAMLGGNGGGNGSQLIGGNGLNMDDSMAATNSSRPPYDTPERRPSIRMRQGGGGGGGGVGVGGMPSGGGGGGVGNAK</sequence>
<feature type="chain" id="PRO_0000192849" description="Discs overgrown protein kinase">
    <location>
        <begin position="1"/>
        <end position="440"/>
    </location>
</feature>
<feature type="domain" description="Protein kinase" evidence="1">
    <location>
        <begin position="9"/>
        <end position="277"/>
    </location>
</feature>
<feature type="region of interest" description="Nuclear localization signal; essential for interaction with Bdbt and important for nuclear localization" evidence="7">
    <location>
        <begin position="221"/>
        <end position="224"/>
    </location>
</feature>
<feature type="region of interest" description="Disordered" evidence="3">
    <location>
        <begin position="376"/>
        <end position="440"/>
    </location>
</feature>
<feature type="compositionally biased region" description="Gly residues" evidence="3">
    <location>
        <begin position="413"/>
        <end position="440"/>
    </location>
</feature>
<feature type="active site" description="Proton acceptor" evidence="1 2">
    <location>
        <position position="128"/>
    </location>
</feature>
<feature type="binding site" evidence="1">
    <location>
        <begin position="15"/>
        <end position="23"/>
    </location>
    <ligand>
        <name>ATP</name>
        <dbReference type="ChEBI" id="CHEBI:30616"/>
    </ligand>
</feature>
<feature type="binding site" evidence="1">
    <location>
        <position position="38"/>
    </location>
    <ligand>
        <name>ATP</name>
        <dbReference type="ChEBI" id="CHEBI:30616"/>
    </ligand>
</feature>
<feature type="modified residue" description="Phosphoserine" evidence="6">
    <location>
        <position position="333"/>
    </location>
</feature>
<feature type="modified residue" description="Phosphoserine" evidence="6">
    <location>
        <position position="334"/>
    </location>
</feature>
<feature type="mutagenesis site" description="Increases the period lengths of circadian rhythms and displays an increase in hypophosphorylated per. No effect on interaction with Bdbt." evidence="7">
    <original>K</original>
    <variation>R</variation>
    <location>
        <position position="38"/>
    </location>
</feature>
<feature type="mutagenesis site" description="In dbtS; shortens the behavioral period." evidence="10">
    <original>P</original>
    <variation>S</variation>
    <location>
        <position position="47"/>
    </location>
</feature>
<feature type="mutagenesis site" description="In dbtL; lengthens the behavioral period." evidence="10">
    <original>M</original>
    <variation>I</variation>
    <location>
        <position position="80"/>
    </location>
</feature>
<feature type="mutagenesis site" description="Increased cytosolic localization. Abolishes interaction with Bdbt and shortens the period lengths of circadian rhythms." evidence="7">
    <original>KRQK</original>
    <variation>NNQN</variation>
    <location>
        <begin position="221"/>
        <end position="224"/>
    </location>
</feature>
<feature type="sequence conflict" description="In Ref. 1; AAC39134." evidence="12" ref="1">
    <original>A</original>
    <variation>R</variation>
    <location>
        <position position="353"/>
    </location>
</feature>
<feature type="sequence conflict" description="In Ref. 1; AAC39134." evidence="12" ref="1">
    <original>P</original>
    <variation>Q</variation>
    <location>
        <position position="428"/>
    </location>
</feature>
<accession>O76324</accession>
<accession>A4V3P5</accession>
<accession>Q0KHY4</accession>
<accession>Q9V462</accession>
<reference key="1">
    <citation type="journal article" date="1998" name="Cell">
        <title>The Drosophila clock gene double-time encodes a protein closely related to human casein kinase I epsilon.</title>
        <authorList>
            <person name="Kloss B."/>
            <person name="Price J.L."/>
            <person name="Saez L."/>
            <person name="Blau J."/>
            <person name="Rothenfluh A."/>
            <person name="Wesley C.S."/>
            <person name="Young M.W."/>
        </authorList>
    </citation>
    <scope>NUCLEOTIDE SEQUENCE [MRNA]</scope>
    <scope>FUNCTION</scope>
    <scope>INTERACTION WITH PER</scope>
</reference>
<reference key="2">
    <citation type="journal article" date="1999" name="Development">
        <title>Double-time is identical to discs overgrown, which is required for cell survival, proliferation and growth arrest in Drosophila imaginal discs.</title>
        <authorList>
            <person name="Zilian O."/>
            <person name="Frei E."/>
            <person name="Burke R."/>
            <person name="Brentrup D."/>
            <person name="Gutjahr T."/>
            <person name="Bryant P.J."/>
            <person name="Noll M."/>
        </authorList>
    </citation>
    <scope>NUCLEOTIDE SEQUENCE [GENOMIC DNA]</scope>
    <scope>FUNCTION</scope>
    <scope>TISSUE SPECIFICITY</scope>
</reference>
<reference key="3">
    <citation type="journal article" date="2000" name="Science">
        <title>The genome sequence of Drosophila melanogaster.</title>
        <authorList>
            <person name="Adams M.D."/>
            <person name="Celniker S.E."/>
            <person name="Holt R.A."/>
            <person name="Evans C.A."/>
            <person name="Gocayne J.D."/>
            <person name="Amanatides P.G."/>
            <person name="Scherer S.E."/>
            <person name="Li P.W."/>
            <person name="Hoskins R.A."/>
            <person name="Galle R.F."/>
            <person name="George R.A."/>
            <person name="Lewis S.E."/>
            <person name="Richards S."/>
            <person name="Ashburner M."/>
            <person name="Henderson S.N."/>
            <person name="Sutton G.G."/>
            <person name="Wortman J.R."/>
            <person name="Yandell M.D."/>
            <person name="Zhang Q."/>
            <person name="Chen L.X."/>
            <person name="Brandon R.C."/>
            <person name="Rogers Y.-H.C."/>
            <person name="Blazej R.G."/>
            <person name="Champe M."/>
            <person name="Pfeiffer B.D."/>
            <person name="Wan K.H."/>
            <person name="Doyle C."/>
            <person name="Baxter E.G."/>
            <person name="Helt G."/>
            <person name="Nelson C.R."/>
            <person name="Miklos G.L.G."/>
            <person name="Abril J.F."/>
            <person name="Agbayani A."/>
            <person name="An H.-J."/>
            <person name="Andrews-Pfannkoch C."/>
            <person name="Baldwin D."/>
            <person name="Ballew R.M."/>
            <person name="Basu A."/>
            <person name="Baxendale J."/>
            <person name="Bayraktaroglu L."/>
            <person name="Beasley E.M."/>
            <person name="Beeson K.Y."/>
            <person name="Benos P.V."/>
            <person name="Berman B.P."/>
            <person name="Bhandari D."/>
            <person name="Bolshakov S."/>
            <person name="Borkova D."/>
            <person name="Botchan M.R."/>
            <person name="Bouck J."/>
            <person name="Brokstein P."/>
            <person name="Brottier P."/>
            <person name="Burtis K.C."/>
            <person name="Busam D.A."/>
            <person name="Butler H."/>
            <person name="Cadieu E."/>
            <person name="Center A."/>
            <person name="Chandra I."/>
            <person name="Cherry J.M."/>
            <person name="Cawley S."/>
            <person name="Dahlke C."/>
            <person name="Davenport L.B."/>
            <person name="Davies P."/>
            <person name="de Pablos B."/>
            <person name="Delcher A."/>
            <person name="Deng Z."/>
            <person name="Mays A.D."/>
            <person name="Dew I."/>
            <person name="Dietz S.M."/>
            <person name="Dodson K."/>
            <person name="Doup L.E."/>
            <person name="Downes M."/>
            <person name="Dugan-Rocha S."/>
            <person name="Dunkov B.C."/>
            <person name="Dunn P."/>
            <person name="Durbin K.J."/>
            <person name="Evangelista C.C."/>
            <person name="Ferraz C."/>
            <person name="Ferriera S."/>
            <person name="Fleischmann W."/>
            <person name="Fosler C."/>
            <person name="Gabrielian A.E."/>
            <person name="Garg N.S."/>
            <person name="Gelbart W.M."/>
            <person name="Glasser K."/>
            <person name="Glodek A."/>
            <person name="Gong F."/>
            <person name="Gorrell J.H."/>
            <person name="Gu Z."/>
            <person name="Guan P."/>
            <person name="Harris M."/>
            <person name="Harris N.L."/>
            <person name="Harvey D.A."/>
            <person name="Heiman T.J."/>
            <person name="Hernandez J.R."/>
            <person name="Houck J."/>
            <person name="Hostin D."/>
            <person name="Houston K.A."/>
            <person name="Howland T.J."/>
            <person name="Wei M.-H."/>
            <person name="Ibegwam C."/>
            <person name="Jalali M."/>
            <person name="Kalush F."/>
            <person name="Karpen G.H."/>
            <person name="Ke Z."/>
            <person name="Kennison J.A."/>
            <person name="Ketchum K.A."/>
            <person name="Kimmel B.E."/>
            <person name="Kodira C.D."/>
            <person name="Kraft C.L."/>
            <person name="Kravitz S."/>
            <person name="Kulp D."/>
            <person name="Lai Z."/>
            <person name="Lasko P."/>
            <person name="Lei Y."/>
            <person name="Levitsky A.A."/>
            <person name="Li J.H."/>
            <person name="Li Z."/>
            <person name="Liang Y."/>
            <person name="Lin X."/>
            <person name="Liu X."/>
            <person name="Mattei B."/>
            <person name="McIntosh T.C."/>
            <person name="McLeod M.P."/>
            <person name="McPherson D."/>
            <person name="Merkulov G."/>
            <person name="Milshina N.V."/>
            <person name="Mobarry C."/>
            <person name="Morris J."/>
            <person name="Moshrefi A."/>
            <person name="Mount S.M."/>
            <person name="Moy M."/>
            <person name="Murphy B."/>
            <person name="Murphy L."/>
            <person name="Muzny D.M."/>
            <person name="Nelson D.L."/>
            <person name="Nelson D.R."/>
            <person name="Nelson K.A."/>
            <person name="Nixon K."/>
            <person name="Nusskern D.R."/>
            <person name="Pacleb J.M."/>
            <person name="Palazzolo M."/>
            <person name="Pittman G.S."/>
            <person name="Pan S."/>
            <person name="Pollard J."/>
            <person name="Puri V."/>
            <person name="Reese M.G."/>
            <person name="Reinert K."/>
            <person name="Remington K."/>
            <person name="Saunders R.D.C."/>
            <person name="Scheeler F."/>
            <person name="Shen H."/>
            <person name="Shue B.C."/>
            <person name="Siden-Kiamos I."/>
            <person name="Simpson M."/>
            <person name="Skupski M.P."/>
            <person name="Smith T.J."/>
            <person name="Spier E."/>
            <person name="Spradling A.C."/>
            <person name="Stapleton M."/>
            <person name="Strong R."/>
            <person name="Sun E."/>
            <person name="Svirskas R."/>
            <person name="Tector C."/>
            <person name="Turner R."/>
            <person name="Venter E."/>
            <person name="Wang A.H."/>
            <person name="Wang X."/>
            <person name="Wang Z.-Y."/>
            <person name="Wassarman D.A."/>
            <person name="Weinstock G.M."/>
            <person name="Weissenbach J."/>
            <person name="Williams S.M."/>
            <person name="Woodage T."/>
            <person name="Worley K.C."/>
            <person name="Wu D."/>
            <person name="Yang S."/>
            <person name="Yao Q.A."/>
            <person name="Ye J."/>
            <person name="Yeh R.-F."/>
            <person name="Zaveri J.S."/>
            <person name="Zhan M."/>
            <person name="Zhang G."/>
            <person name="Zhao Q."/>
            <person name="Zheng L."/>
            <person name="Zheng X.H."/>
            <person name="Zhong F.N."/>
            <person name="Zhong W."/>
            <person name="Zhou X."/>
            <person name="Zhu S.C."/>
            <person name="Zhu X."/>
            <person name="Smith H.O."/>
            <person name="Gibbs R.A."/>
            <person name="Myers E.W."/>
            <person name="Rubin G.M."/>
            <person name="Venter J.C."/>
        </authorList>
    </citation>
    <scope>NUCLEOTIDE SEQUENCE [LARGE SCALE GENOMIC DNA]</scope>
    <source>
        <strain>Berkeley</strain>
    </source>
</reference>
<reference key="4">
    <citation type="journal article" date="2002" name="Genome Biol.">
        <title>Annotation of the Drosophila melanogaster euchromatic genome: a systematic review.</title>
        <authorList>
            <person name="Misra S."/>
            <person name="Crosby M.A."/>
            <person name="Mungall C.J."/>
            <person name="Matthews B.B."/>
            <person name="Campbell K.S."/>
            <person name="Hradecky P."/>
            <person name="Huang Y."/>
            <person name="Kaminker J.S."/>
            <person name="Millburn G.H."/>
            <person name="Prochnik S.E."/>
            <person name="Smith C.D."/>
            <person name="Tupy J.L."/>
            <person name="Whitfield E.J."/>
            <person name="Bayraktaroglu L."/>
            <person name="Berman B.P."/>
            <person name="Bettencourt B.R."/>
            <person name="Celniker S.E."/>
            <person name="de Grey A.D.N.J."/>
            <person name="Drysdale R.A."/>
            <person name="Harris N.L."/>
            <person name="Richter J."/>
            <person name="Russo S."/>
            <person name="Schroeder A.J."/>
            <person name="Shu S.Q."/>
            <person name="Stapleton M."/>
            <person name="Yamada C."/>
            <person name="Ashburner M."/>
            <person name="Gelbart W.M."/>
            <person name="Rubin G.M."/>
            <person name="Lewis S.E."/>
        </authorList>
    </citation>
    <scope>GENOME REANNOTATION</scope>
    <source>
        <strain>Berkeley</strain>
    </source>
</reference>
<reference key="5">
    <citation type="journal article" date="2000" name="Science">
        <title>A Drosophila complementary DNA resource.</title>
        <authorList>
            <person name="Rubin G.M."/>
            <person name="Hong L."/>
            <person name="Brokstein P."/>
            <person name="Evans-Holm M."/>
            <person name="Frise E."/>
            <person name="Stapleton M."/>
            <person name="Harvey D.A."/>
        </authorList>
    </citation>
    <scope>NUCLEOTIDE SEQUENCE [LARGE SCALE MRNA]</scope>
    <source>
        <strain>Berkeley</strain>
        <tissue>Embryo</tissue>
    </source>
</reference>
<reference key="6">
    <citation type="journal article" date="1998" name="Cell">
        <title>Double-time is a novel Drosophila clock gene that regulates PERIOD protein accumulation.</title>
        <authorList>
            <person name="Price J.L."/>
            <person name="Blau J."/>
            <person name="Rothenfluh A."/>
            <person name="Abodeely M."/>
            <person name="Kloss B."/>
            <person name="Young M.W."/>
        </authorList>
    </citation>
    <scope>MUTAGENESIS</scope>
    <scope>FUNCTION</scope>
</reference>
<reference key="7">
    <citation type="journal article" date="2005" name="Dev. Cell">
        <title>Phosphorylation by double-time/CKIepsilon and CKIalpha targets cubitus interruptus for Slimb/beta-TRCP-mediated proteolytic processing.</title>
        <authorList>
            <person name="Jia J."/>
            <person name="Zhang L."/>
            <person name="Zhang Q."/>
            <person name="Tong C."/>
            <person name="Wang B."/>
            <person name="Hou F."/>
            <person name="Amanai K."/>
            <person name="Jiang J."/>
        </authorList>
    </citation>
    <scope>FUNCTION</scope>
</reference>
<reference key="8">
    <citation type="journal article" date="2008" name="J. Proteome Res.">
        <title>Phosphoproteome analysis of Drosophila melanogaster embryos.</title>
        <authorList>
            <person name="Zhai B."/>
            <person name="Villen J."/>
            <person name="Beausoleil S.A."/>
            <person name="Mintseris J."/>
            <person name="Gygi S.P."/>
        </authorList>
    </citation>
    <scope>PHOSPHORYLATION [LARGE SCALE ANALYSIS] AT SER-333 AND SER-334</scope>
    <scope>IDENTIFICATION BY MASS SPECTROMETRY</scope>
    <source>
        <tissue>Embryo</tissue>
    </source>
</reference>
<reference key="9">
    <citation type="journal article" date="2015" name="J. Biol. Rhythms">
        <title>A Doubletime Nuclear Localization Signal Mediates an Interaction with Bride of Doubletime to Promote Circadian Function.</title>
        <authorList>
            <person name="Venkatesan A."/>
            <person name="Fan J.Y."/>
            <person name="Nauman C."/>
            <person name="Price J.L."/>
        </authorList>
    </citation>
    <scope>FUNCTION</scope>
    <scope>INTERACTION WITH BDBT</scope>
    <scope>SUBCELLULAR LOCATION</scope>
    <scope>TISSUE SPECIFICITY</scope>
    <scope>MUTAGENESIS OF LYS-38 AND 221-LYS--LYS-224</scope>
</reference>
<reference key="10">
    <citation type="journal article" date="2016" name="Elife">
        <title>The novel SH3 domain protein Dlish/CG10933 mediates fat signaling in Drosophila by binding and regulating Dachs.</title>
        <authorList>
            <person name="Zhang Y."/>
            <person name="Wang X."/>
            <person name="Matakatsu H."/>
            <person name="Fehon R."/>
            <person name="Blair S.S."/>
        </authorList>
    </citation>
    <scope>INTERACTION WITH DLISH</scope>
</reference>
<reference key="11">
    <citation type="journal article" date="2016" name="Elife">
        <authorList>
            <person name="Zhang Y."/>
            <person name="Wang X."/>
            <person name="Matakatsu H."/>
            <person name="Fehon R."/>
            <person name="Blair S.S."/>
        </authorList>
    </citation>
    <scope>ERRATUM OF PUBMED:27692068</scope>
</reference>
<reference key="12">
    <citation type="journal article" date="2020" name="PLoS Genet.">
        <title>DAnkrd49 and Bdbt act via Casein kinase Iepsilon to regulate planar polarity in Drosophila.</title>
        <authorList>
            <person name="Strutt H."/>
            <person name="Strutt D."/>
        </authorList>
    </citation>
    <scope>FUNCTION</scope>
</reference>
<keyword id="KW-0067">ATP-binding</keyword>
<keyword id="KW-0090">Biological rhythms</keyword>
<keyword id="KW-0963">Cytoplasm</keyword>
<keyword id="KW-0418">Kinase</keyword>
<keyword id="KW-0547">Nucleotide-binding</keyword>
<keyword id="KW-0539">Nucleus</keyword>
<keyword id="KW-0597">Phosphoprotein</keyword>
<keyword id="KW-1185">Reference proteome</keyword>
<keyword id="KW-0723">Serine/threonine-protein kinase</keyword>
<keyword id="KW-0808">Transferase</keyword>
<organism>
    <name type="scientific">Drosophila melanogaster</name>
    <name type="common">Fruit fly</name>
    <dbReference type="NCBI Taxonomy" id="7227"/>
    <lineage>
        <taxon>Eukaryota</taxon>
        <taxon>Metazoa</taxon>
        <taxon>Ecdysozoa</taxon>
        <taxon>Arthropoda</taxon>
        <taxon>Hexapoda</taxon>
        <taxon>Insecta</taxon>
        <taxon>Pterygota</taxon>
        <taxon>Neoptera</taxon>
        <taxon>Endopterygota</taxon>
        <taxon>Diptera</taxon>
        <taxon>Brachycera</taxon>
        <taxon>Muscomorpha</taxon>
        <taxon>Ephydroidea</taxon>
        <taxon>Drosophilidae</taxon>
        <taxon>Drosophila</taxon>
        <taxon>Sophophora</taxon>
    </lineage>
</organism>
<gene>
    <name type="primary">dco</name>
    <name type="synonym">dbt</name>
    <name type="ORF">CG2048</name>
</gene>
<dbReference type="EC" id="2.7.11.1"/>
<dbReference type="EMBL" id="AF055583">
    <property type="protein sequence ID" value="AAC39134.1"/>
    <property type="molecule type" value="mRNA"/>
</dbReference>
<dbReference type="EMBL" id="AF192484">
    <property type="protein sequence ID" value="AAF27346.1"/>
    <property type="molecule type" value="Genomic_DNA"/>
</dbReference>
<dbReference type="EMBL" id="AE014297">
    <property type="protein sequence ID" value="AAF57109.1"/>
    <property type="molecule type" value="Genomic_DNA"/>
</dbReference>
<dbReference type="EMBL" id="AE014297">
    <property type="protein sequence ID" value="AAF57110.1"/>
    <property type="molecule type" value="Genomic_DNA"/>
</dbReference>
<dbReference type="EMBL" id="AF132558">
    <property type="protein sequence ID" value="AAD27857.1"/>
    <property type="molecule type" value="mRNA"/>
</dbReference>
<dbReference type="RefSeq" id="NP_001263132.1">
    <property type="nucleotide sequence ID" value="NM_001276203.1"/>
</dbReference>
<dbReference type="RefSeq" id="NP_001356928.1">
    <property type="nucleotide sequence ID" value="NM_001369991.1"/>
</dbReference>
<dbReference type="RefSeq" id="NP_524602.1">
    <property type="nucleotide sequence ID" value="NM_079863.3"/>
</dbReference>
<dbReference type="RefSeq" id="NP_733414.1">
    <property type="nucleotide sequence ID" value="NM_170535.2"/>
</dbReference>
<dbReference type="RefSeq" id="NP_733415.1">
    <property type="nucleotide sequence ID" value="NM_170536.3"/>
</dbReference>
<dbReference type="SMR" id="O76324"/>
<dbReference type="BioGRID" id="68523">
    <property type="interactions" value="40"/>
</dbReference>
<dbReference type="DIP" id="DIP-46048N"/>
<dbReference type="FunCoup" id="O76324">
    <property type="interactions" value="2008"/>
</dbReference>
<dbReference type="IntAct" id="O76324">
    <property type="interactions" value="12"/>
</dbReference>
<dbReference type="STRING" id="7227.FBpp0306615"/>
<dbReference type="iPTMnet" id="O76324"/>
<dbReference type="PaxDb" id="7227-FBpp0085104"/>
<dbReference type="EnsemblMetazoa" id="FBtr0085742">
    <property type="protein sequence ID" value="FBpp0085104"/>
    <property type="gene ID" value="FBgn0002413"/>
</dbReference>
<dbReference type="EnsemblMetazoa" id="FBtr0085743">
    <property type="protein sequence ID" value="FBpp0085105"/>
    <property type="gene ID" value="FBgn0002413"/>
</dbReference>
<dbReference type="EnsemblMetazoa" id="FBtr0085744">
    <property type="protein sequence ID" value="FBpp0085106"/>
    <property type="gene ID" value="FBgn0002413"/>
</dbReference>
<dbReference type="EnsemblMetazoa" id="FBtr0334548">
    <property type="protein sequence ID" value="FBpp0306615"/>
    <property type="gene ID" value="FBgn0002413"/>
</dbReference>
<dbReference type="EnsemblMetazoa" id="FBtr0473370">
    <property type="protein sequence ID" value="FBpp0422974"/>
    <property type="gene ID" value="FBgn0002413"/>
</dbReference>
<dbReference type="GeneID" id="43673"/>
<dbReference type="KEGG" id="dme:Dmel_CG2048"/>
<dbReference type="UCSC" id="CG2048-RC">
    <property type="organism name" value="d. melanogaster"/>
</dbReference>
<dbReference type="AGR" id="FB:FBgn0002413"/>
<dbReference type="CTD" id="43673"/>
<dbReference type="FlyBase" id="FBgn0002413">
    <property type="gene designation" value="dco"/>
</dbReference>
<dbReference type="VEuPathDB" id="VectorBase:FBgn0002413"/>
<dbReference type="eggNOG" id="KOG1164">
    <property type="taxonomic scope" value="Eukaryota"/>
</dbReference>
<dbReference type="GeneTree" id="ENSGT00940000153536"/>
<dbReference type="HOGENOM" id="CLU_019279_2_0_1"/>
<dbReference type="InParanoid" id="O76324"/>
<dbReference type="OMA" id="IFDWTFL"/>
<dbReference type="OrthoDB" id="5800476at2759"/>
<dbReference type="PhylomeDB" id="O76324"/>
<dbReference type="BRENDA" id="2.7.11.1">
    <property type="organism ID" value="1994"/>
</dbReference>
<dbReference type="Reactome" id="R-DME-201688">
    <property type="pathway name" value="WNT mediated activation of DVL"/>
</dbReference>
<dbReference type="Reactome" id="R-DME-209155">
    <property type="pathway name" value="Phosphorylation of AXN and APC"/>
</dbReference>
<dbReference type="Reactome" id="R-DME-209159">
    <property type="pathway name" value="Assembly of the CI containing complexes"/>
</dbReference>
<dbReference type="Reactome" id="R-DME-209190">
    <property type="pathway name" value="Phosphorylation of CI"/>
</dbReference>
<dbReference type="Reactome" id="R-DME-209214">
    <property type="pathway name" value="Phosphorylation of SMO"/>
</dbReference>
<dbReference type="Reactome" id="R-DME-209360">
    <property type="pathway name" value="Ubiquitination and proteolysis of phosphorylated CI"/>
</dbReference>
<dbReference type="Reactome" id="R-DME-209396">
    <property type="pathway name" value="Phosphorylation of ARM"/>
</dbReference>
<dbReference type="Reactome" id="R-DME-209413">
    <property type="pathway name" value="Assembly of the 'destruction complex'"/>
</dbReference>
<dbReference type="Reactome" id="R-DME-209440">
    <property type="pathway name" value="Recruitment of the 'destruction complex' to the receptor complex, the degradation of AXN and release of ARM"/>
</dbReference>
<dbReference type="Reactome" id="R-DME-209461">
    <property type="pathway name" value="Ubiquitination and degradation of phosphorylated ARM"/>
</dbReference>
<dbReference type="Reactome" id="R-DME-390023">
    <property type="pathway name" value="Subcellular localisation of D"/>
</dbReference>
<dbReference type="Reactome" id="R-DME-390150">
    <property type="pathway name" value="DS ligand bound to FT receptor"/>
</dbReference>
<dbReference type="Reactome" id="R-DME-432395">
    <property type="pathway name" value="Degradation of TIM"/>
</dbReference>
<dbReference type="Reactome" id="R-DME-432490">
    <property type="pathway name" value="Nuclear import of PER and TIM"/>
</dbReference>
<dbReference type="Reactome" id="R-DME-432501">
    <property type="pathway name" value="Transcription repression by PER and activation by PDP1"/>
</dbReference>
<dbReference type="Reactome" id="R-DME-432524">
    <property type="pathway name" value="Degradation of PER"/>
</dbReference>
<dbReference type="Reactome" id="R-DME-432553">
    <property type="pathway name" value="Phosphorylation of PER and TIM"/>
</dbReference>
<dbReference type="Reactome" id="R-DME-432620">
    <property type="pathway name" value="Dephosphorylation of PER"/>
</dbReference>
<dbReference type="Reactome" id="R-DME-538898">
    <property type="pathway name" value="Dephosphorylation of TIM"/>
</dbReference>
<dbReference type="SignaLink" id="O76324"/>
<dbReference type="BioGRID-ORCS" id="43673">
    <property type="hits" value="1 hit in 3 CRISPR screens"/>
</dbReference>
<dbReference type="ChiTaRS" id="dco">
    <property type="organism name" value="fly"/>
</dbReference>
<dbReference type="GenomeRNAi" id="43673"/>
<dbReference type="PRO" id="PR:O76324"/>
<dbReference type="Proteomes" id="UP000000803">
    <property type="component" value="Chromosome 3R"/>
</dbReference>
<dbReference type="Bgee" id="FBgn0002413">
    <property type="expression patterns" value="Expressed in outer photoreceptor cell (Drosophila) in insect head and 298 other cell types or tissues"/>
</dbReference>
<dbReference type="ExpressionAtlas" id="O76324">
    <property type="expression patterns" value="baseline and differential"/>
</dbReference>
<dbReference type="GO" id="GO:0044297">
    <property type="term" value="C:cell body"/>
    <property type="evidence" value="ECO:0000314"/>
    <property type="project" value="FlyBase"/>
</dbReference>
<dbReference type="GO" id="GO:0005737">
    <property type="term" value="C:cytoplasm"/>
    <property type="evidence" value="ECO:0000314"/>
    <property type="project" value="FlyBase"/>
</dbReference>
<dbReference type="GO" id="GO:0005829">
    <property type="term" value="C:cytosol"/>
    <property type="evidence" value="ECO:0000314"/>
    <property type="project" value="UniProtKB"/>
</dbReference>
<dbReference type="GO" id="GO:0005654">
    <property type="term" value="C:nucleoplasm"/>
    <property type="evidence" value="ECO:0000304"/>
    <property type="project" value="Reactome"/>
</dbReference>
<dbReference type="GO" id="GO:0005634">
    <property type="term" value="C:nucleus"/>
    <property type="evidence" value="ECO:0000314"/>
    <property type="project" value="FlyBase"/>
</dbReference>
<dbReference type="GO" id="GO:0005524">
    <property type="term" value="F:ATP binding"/>
    <property type="evidence" value="ECO:0007669"/>
    <property type="project" value="UniProtKB-KW"/>
</dbReference>
<dbReference type="GO" id="GO:0106310">
    <property type="term" value="F:protein serine kinase activity"/>
    <property type="evidence" value="ECO:0007669"/>
    <property type="project" value="RHEA"/>
</dbReference>
<dbReference type="GO" id="GO:0004674">
    <property type="term" value="F:protein serine/threonine kinase activity"/>
    <property type="evidence" value="ECO:0000314"/>
    <property type="project" value="FlyBase"/>
</dbReference>
<dbReference type="GO" id="GO:0048148">
    <property type="term" value="P:behavioral response to cocaine"/>
    <property type="evidence" value="ECO:0000315"/>
    <property type="project" value="FlyBase"/>
</dbReference>
<dbReference type="GO" id="GO:0007154">
    <property type="term" value="P:cell communication"/>
    <property type="evidence" value="ECO:0000315"/>
    <property type="project" value="FlyBase"/>
</dbReference>
<dbReference type="GO" id="GO:0071482">
    <property type="term" value="P:cellular response to light stimulus"/>
    <property type="evidence" value="ECO:0000314"/>
    <property type="project" value="FlyBase"/>
</dbReference>
<dbReference type="GO" id="GO:0007623">
    <property type="term" value="P:circadian rhythm"/>
    <property type="evidence" value="ECO:0000314"/>
    <property type="project" value="FlyBase"/>
</dbReference>
<dbReference type="GO" id="GO:0006897">
    <property type="term" value="P:endocytosis"/>
    <property type="evidence" value="ECO:0000318"/>
    <property type="project" value="GO_Central"/>
</dbReference>
<dbReference type="GO" id="GO:0007446">
    <property type="term" value="P:imaginal disc growth"/>
    <property type="evidence" value="ECO:0000315"/>
    <property type="project" value="FlyBase"/>
</dbReference>
<dbReference type="GO" id="GO:0045475">
    <property type="term" value="P:locomotor rhythm"/>
    <property type="evidence" value="ECO:0000315"/>
    <property type="project" value="FlyBase"/>
</dbReference>
<dbReference type="GO" id="GO:0043066">
    <property type="term" value="P:negative regulation of apoptotic process"/>
    <property type="evidence" value="ECO:0000315"/>
    <property type="project" value="FlyBase"/>
</dbReference>
<dbReference type="GO" id="GO:0001933">
    <property type="term" value="P:negative regulation of protein phosphorylation"/>
    <property type="evidence" value="ECO:0000315"/>
    <property type="project" value="UniProtKB"/>
</dbReference>
<dbReference type="GO" id="GO:0045879">
    <property type="term" value="P:negative regulation of smoothened signaling pathway"/>
    <property type="evidence" value="ECO:0000315"/>
    <property type="project" value="FlyBase"/>
</dbReference>
<dbReference type="GO" id="GO:0030838">
    <property type="term" value="P:positive regulation of actin filament polymerization"/>
    <property type="evidence" value="ECO:0000315"/>
    <property type="project" value="UniProtKB"/>
</dbReference>
<dbReference type="GO" id="GO:0090263">
    <property type="term" value="P:positive regulation of canonical Wnt signaling pathway"/>
    <property type="evidence" value="ECO:0000315"/>
    <property type="project" value="FlyBase"/>
</dbReference>
<dbReference type="GO" id="GO:0051781">
    <property type="term" value="P:positive regulation of cell division"/>
    <property type="evidence" value="ECO:0000315"/>
    <property type="project" value="FlyBase"/>
</dbReference>
<dbReference type="GO" id="GO:0030307">
    <property type="term" value="P:positive regulation of cell growth"/>
    <property type="evidence" value="ECO:0000315"/>
    <property type="project" value="FlyBase"/>
</dbReference>
<dbReference type="GO" id="GO:0035332">
    <property type="term" value="P:positive regulation of hippo signaling"/>
    <property type="evidence" value="ECO:0000315"/>
    <property type="project" value="FlyBase"/>
</dbReference>
<dbReference type="GO" id="GO:0032436">
    <property type="term" value="P:positive regulation of proteasomal ubiquitin-dependent protein catabolic process"/>
    <property type="evidence" value="ECO:0000315"/>
    <property type="project" value="FlyBase"/>
</dbReference>
<dbReference type="GO" id="GO:0045732">
    <property type="term" value="P:positive regulation of protein catabolic process"/>
    <property type="evidence" value="ECO:0000314"/>
    <property type="project" value="FlyBase"/>
</dbReference>
<dbReference type="GO" id="GO:0045880">
    <property type="term" value="P:positive regulation of smoothened signaling pathway"/>
    <property type="evidence" value="ECO:0000316"/>
    <property type="project" value="FlyBase"/>
</dbReference>
<dbReference type="GO" id="GO:0030177">
    <property type="term" value="P:positive regulation of Wnt signaling pathway"/>
    <property type="evidence" value="ECO:0000316"/>
    <property type="project" value="FlyBase"/>
</dbReference>
<dbReference type="GO" id="GO:0042752">
    <property type="term" value="P:regulation of circadian rhythm"/>
    <property type="evidence" value="ECO:0000315"/>
    <property type="project" value="UniProtKB"/>
</dbReference>
<dbReference type="GO" id="GO:0007555">
    <property type="term" value="P:regulation of ecdysteroid secretion"/>
    <property type="evidence" value="ECO:0000315"/>
    <property type="project" value="FlyBase"/>
</dbReference>
<dbReference type="GO" id="GO:0090175">
    <property type="term" value="P:regulation of establishment of planar polarity"/>
    <property type="evidence" value="ECO:0000316"/>
    <property type="project" value="FlyBase"/>
</dbReference>
<dbReference type="GO" id="GO:0007165">
    <property type="term" value="P:signal transduction"/>
    <property type="evidence" value="ECO:0000318"/>
    <property type="project" value="GO_Central"/>
</dbReference>
<dbReference type="CDD" id="cd14125">
    <property type="entry name" value="STKc_CK1_delta_epsilon"/>
    <property type="match status" value="1"/>
</dbReference>
<dbReference type="FunFam" id="1.10.510.10:FF:000970">
    <property type="entry name" value="Discs overgrown, isoform D"/>
    <property type="match status" value="1"/>
</dbReference>
<dbReference type="FunFam" id="3.30.200.20:FF:000538">
    <property type="entry name" value="Putative Casein kinase I"/>
    <property type="match status" value="1"/>
</dbReference>
<dbReference type="Gene3D" id="1.10.510.10">
    <property type="entry name" value="Transferase(Phosphotransferase) domain 1"/>
    <property type="match status" value="1"/>
</dbReference>
<dbReference type="InterPro" id="IPR050235">
    <property type="entry name" value="CK1_Ser-Thr_kinase"/>
</dbReference>
<dbReference type="InterPro" id="IPR011009">
    <property type="entry name" value="Kinase-like_dom_sf"/>
</dbReference>
<dbReference type="InterPro" id="IPR000719">
    <property type="entry name" value="Prot_kinase_dom"/>
</dbReference>
<dbReference type="InterPro" id="IPR017441">
    <property type="entry name" value="Protein_kinase_ATP_BS"/>
</dbReference>
<dbReference type="InterPro" id="IPR008271">
    <property type="entry name" value="Ser/Thr_kinase_AS"/>
</dbReference>
<dbReference type="PANTHER" id="PTHR11909">
    <property type="entry name" value="CASEIN KINASE-RELATED"/>
    <property type="match status" value="1"/>
</dbReference>
<dbReference type="Pfam" id="PF00069">
    <property type="entry name" value="Pkinase"/>
    <property type="match status" value="1"/>
</dbReference>
<dbReference type="SMART" id="SM00220">
    <property type="entry name" value="S_TKc"/>
    <property type="match status" value="1"/>
</dbReference>
<dbReference type="SUPFAM" id="SSF56112">
    <property type="entry name" value="Protein kinase-like (PK-like)"/>
    <property type="match status" value="1"/>
</dbReference>
<dbReference type="PROSITE" id="PS00107">
    <property type="entry name" value="PROTEIN_KINASE_ATP"/>
    <property type="match status" value="1"/>
</dbReference>
<dbReference type="PROSITE" id="PS50011">
    <property type="entry name" value="PROTEIN_KINASE_DOM"/>
    <property type="match status" value="1"/>
</dbReference>
<dbReference type="PROSITE" id="PS00108">
    <property type="entry name" value="PROTEIN_KINASE_ST"/>
    <property type="match status" value="1"/>
</dbReference>